<sequence length="328" mass="35885">MINIAIDAMGGDFGEKPIIEGVLKALETKPFNAILVGNSKILKPLIPKKLEQYIQYEEASEIFSMNGNATDALKNKETTIYKAINLLKEKKVDAVVSAGHSGASMSLATLKLGRLKGISRPAIATLMPNIVNKTLLLDVGANTDCKAENLFQFAIMGEVYAREIMQIQKPRLALLSNGEEECKGNELTKESHQLMKKIPNFIGNAEGRDIFNGEIDVLVCDGFDGNVILKACEGVATAIFQLLKNEVKQSFISKIGALLMKPSFKKLKKHTDWQEYGGAPLLGVNGCVIISHGKSDSRAIKNAIFQAINFSQSHINKFIENELGKYNA</sequence>
<reference key="1">
    <citation type="journal article" date="2000" name="Nature">
        <title>The genome sequence of the food-borne pathogen Campylobacter jejuni reveals hypervariable sequences.</title>
        <authorList>
            <person name="Parkhill J."/>
            <person name="Wren B.W."/>
            <person name="Mungall K.L."/>
            <person name="Ketley J.M."/>
            <person name="Churcher C.M."/>
            <person name="Basham D."/>
            <person name="Chillingworth T."/>
            <person name="Davies R.M."/>
            <person name="Feltwell T."/>
            <person name="Holroyd S."/>
            <person name="Jagels K."/>
            <person name="Karlyshev A.V."/>
            <person name="Moule S."/>
            <person name="Pallen M.J."/>
            <person name="Penn C.W."/>
            <person name="Quail M.A."/>
            <person name="Rajandream M.A."/>
            <person name="Rutherford K.M."/>
            <person name="van Vliet A.H.M."/>
            <person name="Whitehead S."/>
            <person name="Barrell B.G."/>
        </authorList>
    </citation>
    <scope>NUCLEOTIDE SEQUENCE [LARGE SCALE GENOMIC DNA]</scope>
    <source>
        <strain>ATCC 700819 / NCTC 11168</strain>
    </source>
</reference>
<protein>
    <recommendedName>
        <fullName evidence="1">Phosphate acyltransferase</fullName>
        <ecNumber evidence="1">2.3.1.274</ecNumber>
    </recommendedName>
    <alternativeName>
        <fullName evidence="1">Acyl-ACP phosphotransacylase</fullName>
    </alternativeName>
    <alternativeName>
        <fullName evidence="1">Acyl-[acyl-carrier-protein]--phosphate acyltransferase</fullName>
    </alternativeName>
    <alternativeName>
        <fullName evidence="1">Phosphate-acyl-ACP acyltransferase</fullName>
    </alternativeName>
</protein>
<name>PLSX_CAMJE</name>
<comment type="function">
    <text evidence="1">Catalyzes the reversible formation of acyl-phosphate (acyl-PO(4)) from acyl-[acyl-carrier-protein] (acyl-ACP). This enzyme utilizes acyl-ACP as fatty acyl donor, but not acyl-CoA.</text>
</comment>
<comment type="catalytic activity">
    <reaction evidence="1">
        <text>a fatty acyl-[ACP] + phosphate = an acyl phosphate + holo-[ACP]</text>
        <dbReference type="Rhea" id="RHEA:42292"/>
        <dbReference type="Rhea" id="RHEA-COMP:9685"/>
        <dbReference type="Rhea" id="RHEA-COMP:14125"/>
        <dbReference type="ChEBI" id="CHEBI:43474"/>
        <dbReference type="ChEBI" id="CHEBI:59918"/>
        <dbReference type="ChEBI" id="CHEBI:64479"/>
        <dbReference type="ChEBI" id="CHEBI:138651"/>
        <dbReference type="EC" id="2.3.1.274"/>
    </reaction>
</comment>
<comment type="pathway">
    <text evidence="1">Lipid metabolism; phospholipid metabolism.</text>
</comment>
<comment type="subunit">
    <text evidence="1">Homodimer. Probably interacts with PlsY.</text>
</comment>
<comment type="subcellular location">
    <subcellularLocation>
        <location evidence="1">Cytoplasm</location>
    </subcellularLocation>
    <text evidence="1">Associated with the membrane possibly through PlsY.</text>
</comment>
<comment type="similarity">
    <text evidence="1">Belongs to the PlsX family.</text>
</comment>
<proteinExistence type="inferred from homology"/>
<accession>Q9PIH0</accession>
<accession>Q0PBI0</accession>
<organism>
    <name type="scientific">Campylobacter jejuni subsp. jejuni serotype O:2 (strain ATCC 700819 / NCTC 11168)</name>
    <dbReference type="NCBI Taxonomy" id="192222"/>
    <lineage>
        <taxon>Bacteria</taxon>
        <taxon>Pseudomonadati</taxon>
        <taxon>Campylobacterota</taxon>
        <taxon>Epsilonproteobacteria</taxon>
        <taxon>Campylobacterales</taxon>
        <taxon>Campylobacteraceae</taxon>
        <taxon>Campylobacter</taxon>
    </lineage>
</organism>
<feature type="chain" id="PRO_0000189858" description="Phosphate acyltransferase">
    <location>
        <begin position="1"/>
        <end position="328"/>
    </location>
</feature>
<gene>
    <name evidence="1" type="primary">plsX</name>
    <name type="ordered locus">Cj0329c</name>
</gene>
<keyword id="KW-0963">Cytoplasm</keyword>
<keyword id="KW-0444">Lipid biosynthesis</keyword>
<keyword id="KW-0443">Lipid metabolism</keyword>
<keyword id="KW-0594">Phospholipid biosynthesis</keyword>
<keyword id="KW-1208">Phospholipid metabolism</keyword>
<keyword id="KW-1185">Reference proteome</keyword>
<keyword id="KW-0808">Transferase</keyword>
<evidence type="ECO:0000255" key="1">
    <source>
        <dbReference type="HAMAP-Rule" id="MF_00019"/>
    </source>
</evidence>
<dbReference type="EC" id="2.3.1.274" evidence="1"/>
<dbReference type="EMBL" id="AL111168">
    <property type="protein sequence ID" value="CAL34480.1"/>
    <property type="molecule type" value="Genomic_DNA"/>
</dbReference>
<dbReference type="PIR" id="E81452">
    <property type="entry name" value="E81452"/>
</dbReference>
<dbReference type="RefSeq" id="WP_002858645.1">
    <property type="nucleotide sequence ID" value="NZ_SZUC01000004.1"/>
</dbReference>
<dbReference type="RefSeq" id="YP_002343767.1">
    <property type="nucleotide sequence ID" value="NC_002163.1"/>
</dbReference>
<dbReference type="SMR" id="Q9PIH0"/>
<dbReference type="IntAct" id="Q9PIH0">
    <property type="interactions" value="4"/>
</dbReference>
<dbReference type="STRING" id="192222.Cj0329c"/>
<dbReference type="PaxDb" id="192222-Cj0329c"/>
<dbReference type="EnsemblBacteria" id="CAL34480">
    <property type="protein sequence ID" value="CAL34480"/>
    <property type="gene ID" value="Cj0329c"/>
</dbReference>
<dbReference type="GeneID" id="904653"/>
<dbReference type="KEGG" id="cje:Cj0329c"/>
<dbReference type="PATRIC" id="fig|192222.6.peg.321"/>
<dbReference type="eggNOG" id="COG0416">
    <property type="taxonomic scope" value="Bacteria"/>
</dbReference>
<dbReference type="HOGENOM" id="CLU_039379_1_1_7"/>
<dbReference type="OrthoDB" id="9806408at2"/>
<dbReference type="UniPathway" id="UPA00085"/>
<dbReference type="Proteomes" id="UP000000799">
    <property type="component" value="Chromosome"/>
</dbReference>
<dbReference type="GO" id="GO:0005737">
    <property type="term" value="C:cytoplasm"/>
    <property type="evidence" value="ECO:0007669"/>
    <property type="project" value="UniProtKB-SubCell"/>
</dbReference>
<dbReference type="GO" id="GO:0043811">
    <property type="term" value="F:phosphate:acyl-[acyl carrier protein] acyltransferase activity"/>
    <property type="evidence" value="ECO:0007669"/>
    <property type="project" value="UniProtKB-UniRule"/>
</dbReference>
<dbReference type="GO" id="GO:0006633">
    <property type="term" value="P:fatty acid biosynthetic process"/>
    <property type="evidence" value="ECO:0007669"/>
    <property type="project" value="UniProtKB-UniRule"/>
</dbReference>
<dbReference type="GO" id="GO:0008654">
    <property type="term" value="P:phospholipid biosynthetic process"/>
    <property type="evidence" value="ECO:0007669"/>
    <property type="project" value="UniProtKB-KW"/>
</dbReference>
<dbReference type="Gene3D" id="3.40.718.10">
    <property type="entry name" value="Isopropylmalate Dehydrogenase"/>
    <property type="match status" value="1"/>
</dbReference>
<dbReference type="HAMAP" id="MF_00019">
    <property type="entry name" value="PlsX"/>
    <property type="match status" value="1"/>
</dbReference>
<dbReference type="InterPro" id="IPR003664">
    <property type="entry name" value="FA_synthesis"/>
</dbReference>
<dbReference type="InterPro" id="IPR012281">
    <property type="entry name" value="Phospholipid_synth_PlsX-like"/>
</dbReference>
<dbReference type="NCBIfam" id="TIGR00182">
    <property type="entry name" value="plsX"/>
    <property type="match status" value="1"/>
</dbReference>
<dbReference type="PANTHER" id="PTHR30100">
    <property type="entry name" value="FATTY ACID/PHOSPHOLIPID SYNTHESIS PROTEIN PLSX"/>
    <property type="match status" value="1"/>
</dbReference>
<dbReference type="PANTHER" id="PTHR30100:SF1">
    <property type="entry name" value="PHOSPHATE ACYLTRANSFERASE"/>
    <property type="match status" value="1"/>
</dbReference>
<dbReference type="Pfam" id="PF02504">
    <property type="entry name" value="FA_synthesis"/>
    <property type="match status" value="1"/>
</dbReference>
<dbReference type="PIRSF" id="PIRSF002465">
    <property type="entry name" value="Phsphlp_syn_PlsX"/>
    <property type="match status" value="1"/>
</dbReference>
<dbReference type="SUPFAM" id="SSF53659">
    <property type="entry name" value="Isocitrate/Isopropylmalate dehydrogenase-like"/>
    <property type="match status" value="1"/>
</dbReference>